<reference key="1">
    <citation type="journal article" date="1988" name="Virology">
        <title>Influenza B virus evolution: co-circulating lineages and comparison of evolutionary pattern with those of influenza A and C viruses.</title>
        <authorList>
            <person name="Yamashita M."/>
            <person name="Krystal M."/>
            <person name="Fitch W.M."/>
            <person name="Palese P."/>
        </authorList>
    </citation>
    <scope>NUCLEOTIDE SEQUENCE [GENOMIC RNA]</scope>
</reference>
<reference key="2">
    <citation type="journal article" date="2003" name="Virology">
        <title>Intracellular warfare between human influenza viruses and human cells: the roles of the viral NS1 protein.</title>
        <authorList>
            <person name="Krug R.M."/>
            <person name="Yuan W."/>
            <person name="Noah D.L."/>
            <person name="Latham A.G."/>
        </authorList>
    </citation>
    <scope>REVIEW</scope>
</reference>
<name>NS1_INBBA</name>
<comment type="function">
    <text evidence="1">Binds and inhibits the conjugation of the ubiquitin-like G1P2/ISG15 protein to its target proteins. Since G1P2/ISG15 is an early antiviral protein, NS1 may inhibit the host antiviral response. Prevents EIF2AK2/PKR activation, either by binding double strand RNA or by interacting directly with EIF2AK2/PKR. Also binds poly(A) and U6 snRNA.</text>
</comment>
<comment type="subunit">
    <text evidence="1">Homodimer. Interacts with and inhibits human G1P2 conjugation by UBE1L.</text>
</comment>
<comment type="subcellular location">
    <subcellularLocation>
        <location evidence="1">Host cytoplasm</location>
    </subcellularLocation>
    <subcellularLocation>
        <location evidence="1">Host nucleus</location>
    </subcellularLocation>
</comment>
<comment type="alternative products">
    <event type="alternative splicing"/>
    <isoform>
        <id>P69256-1</id>
        <name>NS1</name>
        <sequence type="displayed"/>
    </isoform>
    <isoform>
        <id>P69256-2</id>
        <name>NEP</name>
        <name>NS2</name>
        <sequence type="not described"/>
    </isoform>
</comment>
<comment type="similarity">
    <text evidence="1">Belongs to the influenza B viruses NS1 family.</text>
</comment>
<gene>
    <name evidence="1" type="primary">NS</name>
</gene>
<organism>
    <name type="scientific">Influenza B virus (strain B/BA/1978)</name>
    <dbReference type="NCBI Taxonomy" id="11524"/>
    <lineage>
        <taxon>Viruses</taxon>
        <taxon>Riboviria</taxon>
        <taxon>Orthornavirae</taxon>
        <taxon>Negarnaviricota</taxon>
        <taxon>Polyploviricotina</taxon>
        <taxon>Insthoviricetes</taxon>
        <taxon>Articulavirales</taxon>
        <taxon>Orthomyxoviridae</taxon>
        <taxon>Betainfluenzavirus</taxon>
        <taxon>Betainfluenzavirus influenzae</taxon>
        <taxon>Influenza B virus</taxon>
    </lineage>
</organism>
<sequence>MADNMTTTQIEVGPGATNATINFEAGILECYERLSWQRALDYPGQDRLNRLKRKLESRIKTHNKSEPESKRMSLEERKAIGVKMMKVLLFMNPSAGIEGFEPYCMKNPSNSNCPNCNWADYPPTPGKCLDDIEEEPENVDDPTEIVLRDMNNKDARQKIKEEVNTQKEGKFRLTIKRDIRNVLSLRVLVNGTFLKHPNGYKTLSTLHRLNAYDQSGRLVAKLVATDDLTVEDEEDGHRILNSLFERFNEGHSKPIRAAETAVGVLSQFGQEHRLSPEEGDN</sequence>
<organismHost>
    <name type="scientific">Homo sapiens</name>
    <name type="common">Human</name>
    <dbReference type="NCBI Taxonomy" id="9606"/>
</organismHost>
<keyword id="KW-0025">Alternative splicing</keyword>
<keyword id="KW-1035">Host cytoplasm</keyword>
<keyword id="KW-1048">Host nucleus</keyword>
<keyword id="KW-0945">Host-virus interaction</keyword>
<keyword id="KW-1090">Inhibition of host innate immune response by virus</keyword>
<keyword id="KW-1114">Inhibition of host interferon signaling pathway by virus</keyword>
<keyword id="KW-1095">Inhibition of host ISG15 by virus</keyword>
<keyword id="KW-1102">Inhibition of host PKR by virus</keyword>
<keyword id="KW-0922">Interferon antiviral system evasion</keyword>
<keyword id="KW-0694">RNA-binding</keyword>
<keyword id="KW-0899">Viral immunoevasion</keyword>
<feature type="chain" id="PRO_0000078959" description="Non-structural protein 1">
    <location>
        <begin position="1"/>
        <end position="281"/>
    </location>
</feature>
<feature type="region of interest" description="G1P2-binding">
    <location>
        <begin position="1"/>
        <end position="103"/>
    </location>
</feature>
<feature type="region of interest" description="RNA-binding and homodimerization" evidence="1">
    <location>
        <begin position="1"/>
        <end position="93"/>
    </location>
</feature>
<feature type="short sequence motif" description="Nuclear localization signal" evidence="1">
    <location>
        <begin position="50"/>
        <end position="55"/>
    </location>
</feature>
<dbReference type="EMBL" id="M19793">
    <property type="protein sequence ID" value="AAA43690.1"/>
    <property type="molecule type" value="Genomic_RNA"/>
</dbReference>
<dbReference type="SMR" id="P69256"/>
<dbReference type="GO" id="GO:0030430">
    <property type="term" value="C:host cell cytoplasm"/>
    <property type="evidence" value="ECO:0007669"/>
    <property type="project" value="UniProtKB-SubCell"/>
</dbReference>
<dbReference type="GO" id="GO:0042025">
    <property type="term" value="C:host cell nucleus"/>
    <property type="evidence" value="ECO:0007669"/>
    <property type="project" value="UniProtKB-SubCell"/>
</dbReference>
<dbReference type="GO" id="GO:0030291">
    <property type="term" value="F:protein serine/threonine kinase inhibitor activity"/>
    <property type="evidence" value="ECO:0007669"/>
    <property type="project" value="UniProtKB-KW"/>
</dbReference>
<dbReference type="GO" id="GO:0003723">
    <property type="term" value="F:RNA binding"/>
    <property type="evidence" value="ECO:0007669"/>
    <property type="project" value="UniProtKB-KW"/>
</dbReference>
<dbReference type="GO" id="GO:0039579">
    <property type="term" value="P:symbiont-mediated suppression of host ISG15-protein conjugation"/>
    <property type="evidence" value="ECO:0007669"/>
    <property type="project" value="UniProtKB-KW"/>
</dbReference>
<dbReference type="GO" id="GO:0039580">
    <property type="term" value="P:symbiont-mediated suppression of host PKR/eIFalpha signaling"/>
    <property type="evidence" value="ECO:0007669"/>
    <property type="project" value="UniProtKB-KW"/>
</dbReference>
<dbReference type="GO" id="GO:0039502">
    <property type="term" value="P:symbiont-mediated suppression of host type I interferon-mediated signaling pathway"/>
    <property type="evidence" value="ECO:0007669"/>
    <property type="project" value="UniProtKB-KW"/>
</dbReference>
<dbReference type="Gene3D" id="1.10.287.10">
    <property type="entry name" value="S15/NS1, RNA-binding"/>
    <property type="match status" value="1"/>
</dbReference>
<dbReference type="HAMAP" id="MF_04066">
    <property type="entry name" value="INFV_NS1"/>
    <property type="match status" value="1"/>
</dbReference>
<dbReference type="InterPro" id="IPR004208">
    <property type="entry name" value="NS1"/>
</dbReference>
<dbReference type="InterPro" id="IPR009068">
    <property type="entry name" value="uS15_NS1_RNA-bd_sf"/>
</dbReference>
<dbReference type="Pfam" id="PF02942">
    <property type="entry name" value="Flu_B_NS1"/>
    <property type="match status" value="1"/>
</dbReference>
<dbReference type="PIRSF" id="PIRSF003938">
    <property type="entry name" value="Flu_B_NS1"/>
    <property type="match status" value="1"/>
</dbReference>
<dbReference type="SUPFAM" id="SSF47060">
    <property type="entry name" value="S15/NS1 RNA-binding domain"/>
    <property type="match status" value="1"/>
</dbReference>
<accession>P69256</accession>
<accession>P12594</accession>
<protein>
    <recommendedName>
        <fullName evidence="1">Non-structural protein 1</fullName>
        <shortName evidence="1">NS1</shortName>
    </recommendedName>
    <alternativeName>
        <fullName evidence="1">NS1A</fullName>
    </alternativeName>
</protein>
<evidence type="ECO:0000255" key="1">
    <source>
        <dbReference type="HAMAP-Rule" id="MF_04066"/>
    </source>
</evidence>
<proteinExistence type="inferred from homology"/>